<gene>
    <name type="primary">PXG2</name>
    <name type="synonym">ATS2</name>
    <name type="synonym">CLO2</name>
    <name type="ordered locus">At5g55240</name>
    <name type="ORF">MCO15.19</name>
</gene>
<name>PXG2_ARATH</name>
<comment type="function">
    <text evidence="5">Calcium-binding peroxygenase involved in the degradation of storage lipid in oil bodies. May be involved in the interaction between oil bodies and vacuoles during seed germination and in the oxylipin signaling pathways and plant defense responses. Can catalyze sulfoxidation of thiobenzamide, hydroxylation of aniline and epoxidation of oleic acid.</text>
</comment>
<comment type="catalytic activity">
    <reaction evidence="6">
        <text>RH + ROOH = ROH + ROH.</text>
        <dbReference type="EC" id="1.11.2.3"/>
    </reaction>
</comment>
<comment type="cofactor">
    <cofactor evidence="1">
        <name>heme b</name>
        <dbReference type="ChEBI" id="CHEBI:60344"/>
    </cofactor>
    <text evidence="1">Binds 1 heme b (iron(II)-protoporphyrin IX) group.</text>
</comment>
<comment type="cofactor">
    <cofactor>
        <name>Ca(2+)</name>
        <dbReference type="ChEBI" id="CHEBI:29108"/>
    </cofactor>
</comment>
<comment type="subunit">
    <text evidence="1">Homodimer.</text>
</comment>
<comment type="subcellular location">
    <subcellularLocation>
        <location evidence="7">Lipid droplet</location>
    </subcellularLocation>
</comment>
<comment type="tissue specificity">
    <text evidence="4 5">Expressed in roots, cotyledons, hypocotyls, leaves, shoots, flowers, siliques and dry seeds.</text>
</comment>
<comment type="induction">
    <text evidence="4 5">Down-regulated by light and upon germination. Not induced by abscisic acid or osmotic stress.</text>
</comment>
<comment type="domain">
    <text>Transmembrane regions are predicted by sequence analysis tools, but these regions probably constitute hydrophobic domains associated to phospholipids.</text>
</comment>
<comment type="domain">
    <text>The proline-knot motif (117-126) may be involved in targeting to lipid bodies.</text>
</comment>
<comment type="similarity">
    <text evidence="8">Belongs to the caleosin family.</text>
</comment>
<feature type="initiator methionine" description="Removed" evidence="3">
    <location>
        <position position="1"/>
    </location>
</feature>
<feature type="chain" id="PRO_0000415553" description="Peroxygenase 2">
    <location>
        <begin position="2"/>
        <end position="243"/>
    </location>
</feature>
<feature type="domain" description="EF-hand">
    <location>
        <begin position="61"/>
        <end position="96"/>
    </location>
</feature>
<feature type="short sequence motif" description="Proline-knot">
    <location>
        <begin position="117"/>
        <end position="126"/>
    </location>
</feature>
<feature type="binding site" description="axial binding residue" evidence="1">
    <location>
        <position position="69"/>
    </location>
    <ligand>
        <name>heme</name>
        <dbReference type="ChEBI" id="CHEBI:30413"/>
    </ligand>
    <ligandPart>
        <name>Fe</name>
        <dbReference type="ChEBI" id="CHEBI:18248"/>
    </ligandPart>
</feature>
<feature type="binding site" evidence="3">
    <location>
        <position position="74"/>
    </location>
    <ligand>
        <name>Ca(2+)</name>
        <dbReference type="ChEBI" id="CHEBI:29108"/>
    </ligand>
</feature>
<feature type="binding site" evidence="3">
    <location>
        <position position="76"/>
    </location>
    <ligand>
        <name>Ca(2+)</name>
        <dbReference type="ChEBI" id="CHEBI:29108"/>
    </ligand>
</feature>
<feature type="binding site" evidence="3">
    <location>
        <position position="78"/>
    </location>
    <ligand>
        <name>Ca(2+)</name>
        <dbReference type="ChEBI" id="CHEBI:29108"/>
    </ligand>
</feature>
<feature type="binding site" evidence="3">
    <location>
        <position position="85"/>
    </location>
    <ligand>
        <name>Ca(2+)</name>
        <dbReference type="ChEBI" id="CHEBI:29108"/>
    </ligand>
</feature>
<feature type="modified residue" description="N-acetylthreonine" evidence="3">
    <location>
        <position position="2"/>
    </location>
</feature>
<feature type="modified residue" description="Phosphoserine" evidence="2">
    <location>
        <position position="224"/>
    </location>
</feature>
<feature type="disulfide bond" evidence="1">
    <location>
        <begin position="220"/>
        <end position="229"/>
    </location>
</feature>
<evidence type="ECO:0000250" key="1"/>
<evidence type="ECO:0000250" key="2">
    <source>
        <dbReference type="UniProtKB" id="O81270"/>
    </source>
</evidence>
<evidence type="ECO:0000255" key="3"/>
<evidence type="ECO:0000269" key="4">
    <source>
    </source>
</evidence>
<evidence type="ECO:0000269" key="5">
    <source>
    </source>
</evidence>
<evidence type="ECO:0000269" key="6">
    <source>
    </source>
</evidence>
<evidence type="ECO:0000269" key="7">
    <source>
    </source>
</evidence>
<evidence type="ECO:0000305" key="8"/>
<organism>
    <name type="scientific">Arabidopsis thaliana</name>
    <name type="common">Mouse-ear cress</name>
    <dbReference type="NCBI Taxonomy" id="3702"/>
    <lineage>
        <taxon>Eukaryota</taxon>
        <taxon>Viridiplantae</taxon>
        <taxon>Streptophyta</taxon>
        <taxon>Embryophyta</taxon>
        <taxon>Tracheophyta</taxon>
        <taxon>Spermatophyta</taxon>
        <taxon>Magnoliopsida</taxon>
        <taxon>eudicotyledons</taxon>
        <taxon>Gunneridae</taxon>
        <taxon>Pentapetalae</taxon>
        <taxon>rosids</taxon>
        <taxon>malvids</taxon>
        <taxon>Brassicales</taxon>
        <taxon>Brassicaceae</taxon>
        <taxon>Camelineae</taxon>
        <taxon>Arabidopsis</taxon>
    </lineage>
</organism>
<proteinExistence type="evidence at protein level"/>
<keyword id="KW-0007">Acetylation</keyword>
<keyword id="KW-0106">Calcium</keyword>
<keyword id="KW-1015">Disulfide bond</keyword>
<keyword id="KW-0349">Heme</keyword>
<keyword id="KW-0408">Iron</keyword>
<keyword id="KW-0551">Lipid droplet</keyword>
<keyword id="KW-0479">Metal-binding</keyword>
<keyword id="KW-0560">Oxidoreductase</keyword>
<keyword id="KW-0597">Phosphoprotein</keyword>
<keyword id="KW-1185">Reference proteome</keyword>
<protein>
    <recommendedName>
        <fullName>Peroxygenase 2</fullName>
        <shortName>AtPXG2</shortName>
        <ecNumber>1.11.2.3</ecNumber>
    </recommendedName>
    <alternativeName>
        <fullName>Caleosin-2</fullName>
    </alternativeName>
    <alternativeName>
        <fullName>Embryo-specific protein 2</fullName>
    </alternativeName>
    <alternativeName>
        <fullName>Putative embryo-specific protein 1 (ATS2)</fullName>
    </alternativeName>
</protein>
<accession>Q9FLN9</accession>
<sequence length="243" mass="27876">MTSMERMERDAMETVAPYARVTYHRRVRGDLDDTLPKPYLPRALQAPDMEHPQGTPDHRHNGLSVLQQHVAFFDLDNNGIIYPFETFSGFRLLGFNLLASLILAAGINIALSYATLPGWLPSPFFPIYIHNIHKAKHGSDSKTYDNEGRYTPANLELMFSKYARTIPDKLSLGELWDMTEGNRDAFDFFGWLASKVEWGVLYALASDEEGFLSKEAIRRCFDGSLFEYCAKNYAEIKEYKTYY</sequence>
<reference key="1">
    <citation type="journal article" date="1998" name="DNA Res.">
        <title>Structural analysis of Arabidopsis thaliana chromosome 5. IV. Sequence features of the regions of 1,456,315 bp covered by nineteen physically assigned P1 and TAC clones.</title>
        <authorList>
            <person name="Sato S."/>
            <person name="Kaneko T."/>
            <person name="Kotani H."/>
            <person name="Nakamura Y."/>
            <person name="Asamizu E."/>
            <person name="Miyajima N."/>
            <person name="Tabata S."/>
        </authorList>
    </citation>
    <scope>NUCLEOTIDE SEQUENCE [LARGE SCALE GENOMIC DNA]</scope>
    <source>
        <strain>cv. Columbia</strain>
    </source>
</reference>
<reference key="2">
    <citation type="journal article" date="2017" name="Plant J.">
        <title>Araport11: a complete reannotation of the Arabidopsis thaliana reference genome.</title>
        <authorList>
            <person name="Cheng C.Y."/>
            <person name="Krishnakumar V."/>
            <person name="Chan A.P."/>
            <person name="Thibaud-Nissen F."/>
            <person name="Schobel S."/>
            <person name="Town C.D."/>
        </authorList>
    </citation>
    <scope>GENOME REANNOTATION</scope>
    <source>
        <strain>cv. Columbia</strain>
    </source>
</reference>
<reference key="3">
    <citation type="journal article" date="2003" name="Science">
        <title>Empirical analysis of transcriptional activity in the Arabidopsis genome.</title>
        <authorList>
            <person name="Yamada K."/>
            <person name="Lim J."/>
            <person name="Dale J.M."/>
            <person name="Chen H."/>
            <person name="Shinn P."/>
            <person name="Palm C.J."/>
            <person name="Southwick A.M."/>
            <person name="Wu H.C."/>
            <person name="Kim C.J."/>
            <person name="Nguyen M."/>
            <person name="Pham P.K."/>
            <person name="Cheuk R.F."/>
            <person name="Karlin-Newmann G."/>
            <person name="Liu S.X."/>
            <person name="Lam B."/>
            <person name="Sakano H."/>
            <person name="Wu T."/>
            <person name="Yu G."/>
            <person name="Miranda M."/>
            <person name="Quach H.L."/>
            <person name="Tripp M."/>
            <person name="Chang C.H."/>
            <person name="Lee J.M."/>
            <person name="Toriumi M.J."/>
            <person name="Chan M.M."/>
            <person name="Tang C.C."/>
            <person name="Onodera C.S."/>
            <person name="Deng J.M."/>
            <person name="Akiyama K."/>
            <person name="Ansari Y."/>
            <person name="Arakawa T."/>
            <person name="Banh J."/>
            <person name="Banno F."/>
            <person name="Bowser L."/>
            <person name="Brooks S.Y."/>
            <person name="Carninci P."/>
            <person name="Chao Q."/>
            <person name="Choy N."/>
            <person name="Enju A."/>
            <person name="Goldsmith A.D."/>
            <person name="Gurjal M."/>
            <person name="Hansen N.F."/>
            <person name="Hayashizaki Y."/>
            <person name="Johnson-Hopson C."/>
            <person name="Hsuan V.W."/>
            <person name="Iida K."/>
            <person name="Karnes M."/>
            <person name="Khan S."/>
            <person name="Koesema E."/>
            <person name="Ishida J."/>
            <person name="Jiang P.X."/>
            <person name="Jones T."/>
            <person name="Kawai J."/>
            <person name="Kamiya A."/>
            <person name="Meyers C."/>
            <person name="Nakajima M."/>
            <person name="Narusaka M."/>
            <person name="Seki M."/>
            <person name="Sakurai T."/>
            <person name="Satou M."/>
            <person name="Tamse R."/>
            <person name="Vaysberg M."/>
            <person name="Wallender E.K."/>
            <person name="Wong C."/>
            <person name="Yamamura Y."/>
            <person name="Yuan S."/>
            <person name="Shinozaki K."/>
            <person name="Davis R.W."/>
            <person name="Theologis A."/>
            <person name="Ecker J.R."/>
        </authorList>
    </citation>
    <scope>NUCLEOTIDE SEQUENCE [LARGE SCALE MRNA]</scope>
    <source>
        <strain>cv. Columbia</strain>
    </source>
</reference>
<reference key="4">
    <citation type="journal article" date="2000" name="Plant Mol. Biol.">
        <title>Caleosins: Ca2+-binding proteins associated with lipid bodies.</title>
        <authorList>
            <person name="Naested H."/>
            <person name="Frandsen G.I."/>
            <person name="Jauh G.Y."/>
            <person name="Hernandez-Pinzon I."/>
            <person name="Nielsen H.B."/>
            <person name="Murphy D.J."/>
            <person name="Rogers J.C."/>
            <person name="Mundy J."/>
        </authorList>
    </citation>
    <scope>GENE FAMILY</scope>
    <scope>NOMENCLATURE</scope>
    <scope>TISSUE SPECIFICITY</scope>
    <scope>INDUCTION</scope>
</reference>
<reference key="5">
    <citation type="journal article" date="2005" name="Planta">
        <title>Differentially expressed genes associated with dormancy or germination of Arabidopsis thaliana seeds.</title>
        <authorList>
            <person name="Toorop P.E."/>
            <person name="Barroco R.M."/>
            <person name="Engler G."/>
            <person name="Groot S.P."/>
            <person name="Hilhorst H.W."/>
        </authorList>
    </citation>
    <scope>FUNCTION</scope>
    <scope>TISSUE SPECIFICITY</scope>
    <scope>INDUCTION</scope>
    <source>
        <strain>cv. Landsberg erecta</strain>
    </source>
</reference>
<reference key="6">
    <citation type="journal article" date="2006" name="J. Biol. Chem.">
        <title>Plant seed peroxygenase is an original heme-oxygenase with an EF-hand calcium binding motif.</title>
        <authorList>
            <person name="Hanano A."/>
            <person name="Burcklen M."/>
            <person name="Flenet M."/>
            <person name="Ivancich A."/>
            <person name="Louwagie M."/>
            <person name="Garin J."/>
            <person name="Blee E."/>
        </authorList>
    </citation>
    <scope>CATALYTIC ACTIVITY</scope>
</reference>
<reference key="7">
    <citation type="journal article" date="2011" name="Proteomics">
        <title>New protein isoforms identified within Arabidopsis thaliana seed oil bodies combining chymotrypsin/trypsin digestion and peptide fragmentation analysis.</title>
        <authorList>
            <person name="Vermachova M."/>
            <person name="Purkrtova Z."/>
            <person name="Santrucek J."/>
            <person name="Jolivet P."/>
            <person name="Chardot T."/>
            <person name="Kodicek M."/>
        </authorList>
    </citation>
    <scope>SUBCELLULAR LOCATION</scope>
    <scope>IDENTIFICATION BY MASS SPECTROMETRY</scope>
</reference>
<dbReference type="EC" id="1.11.2.3"/>
<dbReference type="EMBL" id="AB010071">
    <property type="protein sequence ID" value="BAB08593.1"/>
    <property type="molecule type" value="Genomic_DNA"/>
</dbReference>
<dbReference type="EMBL" id="CP002688">
    <property type="protein sequence ID" value="AED96604.1"/>
    <property type="molecule type" value="Genomic_DNA"/>
</dbReference>
<dbReference type="EMBL" id="BT003943">
    <property type="protein sequence ID" value="AAO41988.1"/>
    <property type="molecule type" value="mRNA"/>
</dbReference>
<dbReference type="EMBL" id="BT005029">
    <property type="protein sequence ID" value="AAO50562.1"/>
    <property type="molecule type" value="mRNA"/>
</dbReference>
<dbReference type="BioGRID" id="20861">
    <property type="interactions" value="1"/>
</dbReference>
<dbReference type="FunCoup" id="Q9FLN9">
    <property type="interactions" value="65"/>
</dbReference>
<dbReference type="STRING" id="3702.Q9FLN9"/>
<dbReference type="iPTMnet" id="Q9FLN9"/>
<dbReference type="PaxDb" id="3702-AT5G55240.1"/>
<dbReference type="ProteomicsDB" id="224820"/>
<dbReference type="EnsemblPlants" id="AT5G55240.1">
    <property type="protein sequence ID" value="AT5G55240.1"/>
    <property type="gene ID" value="AT5G55240"/>
</dbReference>
<dbReference type="GeneID" id="835617"/>
<dbReference type="Gramene" id="AT5G55240.1">
    <property type="protein sequence ID" value="AT5G55240.1"/>
    <property type="gene ID" value="AT5G55240"/>
</dbReference>
<dbReference type="KEGG" id="ath:AT5G55240"/>
<dbReference type="Araport" id="AT5G55240"/>
<dbReference type="TAIR" id="AT5G55240">
    <property type="gene designation" value="ATPXG2"/>
</dbReference>
<dbReference type="eggNOG" id="ENOG502QQD0">
    <property type="taxonomic scope" value="Eukaryota"/>
</dbReference>
<dbReference type="HOGENOM" id="CLU_062049_0_1_1"/>
<dbReference type="InParanoid" id="Q9FLN9"/>
<dbReference type="OMA" id="EYCAKIQ"/>
<dbReference type="PhylomeDB" id="Q9FLN9"/>
<dbReference type="PRO" id="PR:Q9FLN9"/>
<dbReference type="Proteomes" id="UP000006548">
    <property type="component" value="Chromosome 5"/>
</dbReference>
<dbReference type="ExpressionAtlas" id="Q9FLN9">
    <property type="expression patterns" value="baseline and differential"/>
</dbReference>
<dbReference type="GO" id="GO:0005811">
    <property type="term" value="C:lipid droplet"/>
    <property type="evidence" value="ECO:0007669"/>
    <property type="project" value="UniProtKB-SubCell"/>
</dbReference>
<dbReference type="GO" id="GO:0005509">
    <property type="term" value="F:calcium ion binding"/>
    <property type="evidence" value="ECO:0000314"/>
    <property type="project" value="TAIR"/>
</dbReference>
<dbReference type="GO" id="GO:0004392">
    <property type="term" value="F:heme oxygenase (decyclizing) activity"/>
    <property type="evidence" value="ECO:0000314"/>
    <property type="project" value="TAIR"/>
</dbReference>
<dbReference type="GO" id="GO:0071614">
    <property type="term" value="F:linoleic acid epoxygenase activity"/>
    <property type="evidence" value="ECO:0000314"/>
    <property type="project" value="TAIR"/>
</dbReference>
<dbReference type="GO" id="GO:0004497">
    <property type="term" value="F:monooxygenase activity"/>
    <property type="evidence" value="ECO:0000314"/>
    <property type="project" value="TAIR"/>
</dbReference>
<dbReference type="GO" id="GO:1990137">
    <property type="term" value="F:plant seed peroxygenase activity"/>
    <property type="evidence" value="ECO:0007669"/>
    <property type="project" value="UniProtKB-EC"/>
</dbReference>
<dbReference type="GO" id="GO:0006952">
    <property type="term" value="P:defense response"/>
    <property type="evidence" value="ECO:0000304"/>
    <property type="project" value="TAIR"/>
</dbReference>
<dbReference type="GO" id="GO:0031408">
    <property type="term" value="P:oxylipin biosynthetic process"/>
    <property type="evidence" value="ECO:0000314"/>
    <property type="project" value="TAIR"/>
</dbReference>
<dbReference type="InterPro" id="IPR007736">
    <property type="entry name" value="Caleosin-related"/>
</dbReference>
<dbReference type="PANTHER" id="PTHR31495:SF30">
    <property type="entry name" value="PEROXYGENASE 2"/>
    <property type="match status" value="1"/>
</dbReference>
<dbReference type="PANTHER" id="PTHR31495">
    <property type="entry name" value="PEROXYGENASE 3-RELATED"/>
    <property type="match status" value="1"/>
</dbReference>
<dbReference type="Pfam" id="PF05042">
    <property type="entry name" value="Caleosin"/>
    <property type="match status" value="1"/>
</dbReference>